<evidence type="ECO:0000250" key="1"/>
<evidence type="ECO:0000255" key="2"/>
<evidence type="ECO:0000305" key="3"/>
<reference key="1">
    <citation type="journal article" date="1996" name="Proc. Natl. Acad. Sci. U.S.A.">
        <title>Ordered yeast artificial chromosome clones representing the Dictyostelium discoideum genome.</title>
        <authorList>
            <person name="Kuspa A."/>
            <person name="Loomis W.F."/>
        </authorList>
    </citation>
    <scope>NUCLEOTIDE SEQUENCE [LARGE SCALE MRNA]</scope>
    <source>
        <strain>AX4</strain>
    </source>
</reference>
<reference key="2">
    <citation type="journal article" date="2005" name="Nature">
        <title>The genome of the social amoeba Dictyostelium discoideum.</title>
        <authorList>
            <person name="Eichinger L."/>
            <person name="Pachebat J.A."/>
            <person name="Gloeckner G."/>
            <person name="Rajandream M.A."/>
            <person name="Sucgang R."/>
            <person name="Berriman M."/>
            <person name="Song J."/>
            <person name="Olsen R."/>
            <person name="Szafranski K."/>
            <person name="Xu Q."/>
            <person name="Tunggal B."/>
            <person name="Kummerfeld S."/>
            <person name="Madera M."/>
            <person name="Konfortov B.A."/>
            <person name="Rivero F."/>
            <person name="Bankier A.T."/>
            <person name="Lehmann R."/>
            <person name="Hamlin N."/>
            <person name="Davies R."/>
            <person name="Gaudet P."/>
            <person name="Fey P."/>
            <person name="Pilcher K."/>
            <person name="Chen G."/>
            <person name="Saunders D."/>
            <person name="Sodergren E.J."/>
            <person name="Davis P."/>
            <person name="Kerhornou A."/>
            <person name="Nie X."/>
            <person name="Hall N."/>
            <person name="Anjard C."/>
            <person name="Hemphill L."/>
            <person name="Bason N."/>
            <person name="Farbrother P."/>
            <person name="Desany B."/>
            <person name="Just E."/>
            <person name="Morio T."/>
            <person name="Rost R."/>
            <person name="Churcher C.M."/>
            <person name="Cooper J."/>
            <person name="Haydock S."/>
            <person name="van Driessche N."/>
            <person name="Cronin A."/>
            <person name="Goodhead I."/>
            <person name="Muzny D.M."/>
            <person name="Mourier T."/>
            <person name="Pain A."/>
            <person name="Lu M."/>
            <person name="Harper D."/>
            <person name="Lindsay R."/>
            <person name="Hauser H."/>
            <person name="James K.D."/>
            <person name="Quiles M."/>
            <person name="Madan Babu M."/>
            <person name="Saito T."/>
            <person name="Buchrieser C."/>
            <person name="Wardroper A."/>
            <person name="Felder M."/>
            <person name="Thangavelu M."/>
            <person name="Johnson D."/>
            <person name="Knights A."/>
            <person name="Loulseged H."/>
            <person name="Mungall K.L."/>
            <person name="Oliver K."/>
            <person name="Price C."/>
            <person name="Quail M.A."/>
            <person name="Urushihara H."/>
            <person name="Hernandez J."/>
            <person name="Rabbinowitsch E."/>
            <person name="Steffen D."/>
            <person name="Sanders M."/>
            <person name="Ma J."/>
            <person name="Kohara Y."/>
            <person name="Sharp S."/>
            <person name="Simmonds M.N."/>
            <person name="Spiegler S."/>
            <person name="Tivey A."/>
            <person name="Sugano S."/>
            <person name="White B."/>
            <person name="Walker D."/>
            <person name="Woodward J.R."/>
            <person name="Winckler T."/>
            <person name="Tanaka Y."/>
            <person name="Shaulsky G."/>
            <person name="Schleicher M."/>
            <person name="Weinstock G.M."/>
            <person name="Rosenthal A."/>
            <person name="Cox E.C."/>
            <person name="Chisholm R.L."/>
            <person name="Gibbs R.A."/>
            <person name="Loomis W.F."/>
            <person name="Platzer M."/>
            <person name="Kay R.R."/>
            <person name="Williams J.G."/>
            <person name="Dear P.H."/>
            <person name="Noegel A.A."/>
            <person name="Barrell B.G."/>
            <person name="Kuspa A."/>
        </authorList>
    </citation>
    <scope>NUCLEOTIDE SEQUENCE [LARGE SCALE GENOMIC DNA]</scope>
    <source>
        <strain>AX4</strain>
    </source>
</reference>
<name>NDUV1_DICDI</name>
<gene>
    <name type="primary">ndufv1</name>
    <name type="synonym">qinA</name>
    <name type="synonym">rcdG</name>
    <name type="synonym">veg107</name>
    <name type="ORF">DDB_G0288875</name>
</gene>
<comment type="function">
    <text evidence="1">Core subunit of the mitochondrial membrane respiratory chain NADH dehydrogenase (Complex I) that is believed to belong to the minimal assembly required for catalysis. Complex I functions in the transfer of electrons from NADH to the respiratory chain. The immediate electron acceptor for the enzyme is believed to be ubiquinone (By similarity).</text>
</comment>
<comment type="catalytic activity">
    <reaction>
        <text>a ubiquinone + NADH + 5 H(+)(in) = a ubiquinol + NAD(+) + 4 H(+)(out)</text>
        <dbReference type="Rhea" id="RHEA:29091"/>
        <dbReference type="Rhea" id="RHEA-COMP:9565"/>
        <dbReference type="Rhea" id="RHEA-COMP:9566"/>
        <dbReference type="ChEBI" id="CHEBI:15378"/>
        <dbReference type="ChEBI" id="CHEBI:16389"/>
        <dbReference type="ChEBI" id="CHEBI:17976"/>
        <dbReference type="ChEBI" id="CHEBI:57540"/>
        <dbReference type="ChEBI" id="CHEBI:57945"/>
        <dbReference type="EC" id="7.1.1.2"/>
    </reaction>
</comment>
<comment type="cofactor">
    <cofactor evidence="3">
        <name>FMN</name>
        <dbReference type="ChEBI" id="CHEBI:58210"/>
    </cofactor>
    <text evidence="3">Binds 1 FMN.</text>
</comment>
<comment type="cofactor">
    <cofactor evidence="3">
        <name>[4Fe-4S] cluster</name>
        <dbReference type="ChEBI" id="CHEBI:49883"/>
    </cofactor>
    <text evidence="3">Binds 1 [4Fe-4S] cluster.</text>
</comment>
<comment type="subunit">
    <text evidence="1">Complex I is composed of about 45 different subunits. This is a component of the flavoprotein-sulfur (FP) fragment of the enzyme (By similarity).</text>
</comment>
<comment type="subcellular location">
    <subcellularLocation>
        <location evidence="1">Mitochondrion inner membrane</location>
        <topology evidence="1">Peripheral membrane protein</topology>
        <orientation evidence="1">Matrix side</orientation>
    </subcellularLocation>
</comment>
<comment type="similarity">
    <text evidence="3">Belongs to the complex I 51 kDa subunit family.</text>
</comment>
<organism>
    <name type="scientific">Dictyostelium discoideum</name>
    <name type="common">Social amoeba</name>
    <dbReference type="NCBI Taxonomy" id="44689"/>
    <lineage>
        <taxon>Eukaryota</taxon>
        <taxon>Amoebozoa</taxon>
        <taxon>Evosea</taxon>
        <taxon>Eumycetozoa</taxon>
        <taxon>Dictyostelia</taxon>
        <taxon>Dictyosteliales</taxon>
        <taxon>Dictyosteliaceae</taxon>
        <taxon>Dictyostelium</taxon>
    </lineage>
</organism>
<sequence length="479" mass="52691">MMNLGNRVKSVIKLTSTTGLTGKDFQATKVATFSTAQVQQAQENVRSYGGLKDKDRIFTNLYGEHDVYLKGAIARGDWYKTKNIIDKGKDWILKEMMASGLRGRGGAGFPSGLKWSFMPKTTSKDRPQYLVINADEGEPGTCKDREIMRHDPHKLIEGCLLAGFAMRACAAYIYIRGEFHYEAKVLEQAIDEAYKAGLIGENACGTGYKFDVYVHRGAGAYICGEETALIESIEGKQGKPRLKPPFPAMAGLYGCPTTVTNVETVAVAPTILRRGGAWFASFGRPKNAGTKLFCISGHVNNPCTVEEEMSIPLRELIDKHCGGVIGGWDNLKGVIPGGSSVPVLPKNICDNVLMDFDDLRQHRSGLGTAAVIVMNKETDMIAAIARLSKFYKHESCGQCTPCREGVGWLYDITDRLVTGNAKPDEIDSLEEISRQIEGHTICALGDAAAWPVQGLIRHFRPEIEDRIKQFQLNKKQSPF</sequence>
<keyword id="KW-0004">4Fe-4S</keyword>
<keyword id="KW-0249">Electron transport</keyword>
<keyword id="KW-0285">Flavoprotein</keyword>
<keyword id="KW-0288">FMN</keyword>
<keyword id="KW-0408">Iron</keyword>
<keyword id="KW-0411">Iron-sulfur</keyword>
<keyword id="KW-0472">Membrane</keyword>
<keyword id="KW-0479">Metal-binding</keyword>
<keyword id="KW-0496">Mitochondrion</keyword>
<keyword id="KW-0999">Mitochondrion inner membrane</keyword>
<keyword id="KW-0520">NAD</keyword>
<keyword id="KW-0560">Oxidoreductase</keyword>
<keyword id="KW-1185">Reference proteome</keyword>
<keyword id="KW-0679">Respiratory chain</keyword>
<keyword id="KW-0809">Transit peptide</keyword>
<keyword id="KW-1278">Translocase</keyword>
<keyword id="KW-0813">Transport</keyword>
<keyword id="KW-0830">Ubiquinone</keyword>
<proteinExistence type="evidence at transcript level"/>
<accession>Q54I90</accession>
<accession>Q23923</accession>
<protein>
    <recommendedName>
        <fullName>NADH dehydrogenase [ubiquinone] flavoprotein 1, mitochondrial</fullName>
        <ecNumber>7.1.1.2</ecNumber>
    </recommendedName>
    <alternativeName>
        <fullName>Complex I-51kD</fullName>
        <shortName>CI-51kD</shortName>
    </alternativeName>
    <alternativeName>
        <fullName>NADH-ubiquinone oxidoreductase 51 kDa subunit</fullName>
    </alternativeName>
</protein>
<dbReference type="EC" id="7.1.1.2"/>
<dbReference type="EMBL" id="U61989">
    <property type="protein sequence ID" value="AAB03672.1"/>
    <property type="molecule type" value="mRNA"/>
</dbReference>
<dbReference type="EMBL" id="AAFI02000126">
    <property type="protein sequence ID" value="EAL62961.1"/>
    <property type="molecule type" value="Genomic_DNA"/>
</dbReference>
<dbReference type="RefSeq" id="XP_636489.1">
    <property type="nucleotide sequence ID" value="XM_631397.1"/>
</dbReference>
<dbReference type="SMR" id="Q54I90"/>
<dbReference type="FunCoup" id="Q54I90">
    <property type="interactions" value="678"/>
</dbReference>
<dbReference type="STRING" id="44689.Q54I90"/>
<dbReference type="PaxDb" id="44689-DDB0191420"/>
<dbReference type="EnsemblProtists" id="EAL62961">
    <property type="protein sequence ID" value="EAL62961"/>
    <property type="gene ID" value="DDB_G0288875"/>
</dbReference>
<dbReference type="GeneID" id="8626872"/>
<dbReference type="KEGG" id="ddi:DDB_G0288875"/>
<dbReference type="dictyBase" id="DDB_G0288875">
    <property type="gene designation" value="ndufv1"/>
</dbReference>
<dbReference type="VEuPathDB" id="AmoebaDB:DDB_G0288875"/>
<dbReference type="eggNOG" id="KOG2658">
    <property type="taxonomic scope" value="Eukaryota"/>
</dbReference>
<dbReference type="HOGENOM" id="CLU_014881_0_1_1"/>
<dbReference type="InParanoid" id="Q54I90"/>
<dbReference type="OMA" id="QGDGKPH"/>
<dbReference type="PhylomeDB" id="Q54I90"/>
<dbReference type="Reactome" id="R-DDI-6799198">
    <property type="pathway name" value="Complex I biogenesis"/>
</dbReference>
<dbReference type="Reactome" id="R-DDI-9837999">
    <property type="pathway name" value="Mitochondrial protein degradation"/>
</dbReference>
<dbReference type="PRO" id="PR:Q54I90"/>
<dbReference type="Proteomes" id="UP000002195">
    <property type="component" value="Chromosome 5"/>
</dbReference>
<dbReference type="GO" id="GO:0005743">
    <property type="term" value="C:mitochondrial inner membrane"/>
    <property type="evidence" value="ECO:0007669"/>
    <property type="project" value="UniProtKB-SubCell"/>
</dbReference>
<dbReference type="GO" id="GO:0031966">
    <property type="term" value="C:mitochondrial membrane"/>
    <property type="evidence" value="ECO:0000250"/>
    <property type="project" value="UniProtKB"/>
</dbReference>
<dbReference type="GO" id="GO:0005739">
    <property type="term" value="C:mitochondrion"/>
    <property type="evidence" value="ECO:0000250"/>
    <property type="project" value="dictyBase"/>
</dbReference>
<dbReference type="GO" id="GO:0045271">
    <property type="term" value="C:respiratory chain complex I"/>
    <property type="evidence" value="ECO:0000250"/>
    <property type="project" value="UniProtKB"/>
</dbReference>
<dbReference type="GO" id="GO:0051539">
    <property type="term" value="F:4 iron, 4 sulfur cluster binding"/>
    <property type="evidence" value="ECO:0007669"/>
    <property type="project" value="UniProtKB-KW"/>
</dbReference>
<dbReference type="GO" id="GO:0010181">
    <property type="term" value="F:FMN binding"/>
    <property type="evidence" value="ECO:0007669"/>
    <property type="project" value="InterPro"/>
</dbReference>
<dbReference type="GO" id="GO:0046872">
    <property type="term" value="F:metal ion binding"/>
    <property type="evidence" value="ECO:0007669"/>
    <property type="project" value="UniProtKB-KW"/>
</dbReference>
<dbReference type="GO" id="GO:0051287">
    <property type="term" value="F:NAD binding"/>
    <property type="evidence" value="ECO:0007669"/>
    <property type="project" value="InterPro"/>
</dbReference>
<dbReference type="GO" id="GO:0008137">
    <property type="term" value="F:NADH dehydrogenase (ubiquinone) activity"/>
    <property type="evidence" value="ECO:0007669"/>
    <property type="project" value="UniProtKB-EC"/>
</dbReference>
<dbReference type="GO" id="GO:0006120">
    <property type="term" value="P:mitochondrial electron transport, NADH to ubiquinone"/>
    <property type="evidence" value="ECO:0000318"/>
    <property type="project" value="GO_Central"/>
</dbReference>
<dbReference type="FunFam" id="1.20.1440.230:FF:000001">
    <property type="entry name" value="Mitochondrial NADH dehydrogenase flavoprotein 1"/>
    <property type="match status" value="1"/>
</dbReference>
<dbReference type="FunFam" id="3.10.20.600:FF:000001">
    <property type="entry name" value="NADH dehydrogenase [ubiquinone] flavoprotein 1, mitochondrial"/>
    <property type="match status" value="1"/>
</dbReference>
<dbReference type="FunFam" id="3.40.50.11540:FF:000001">
    <property type="entry name" value="NADH dehydrogenase [ubiquinone] flavoprotein 1, mitochondrial"/>
    <property type="match status" value="1"/>
</dbReference>
<dbReference type="Gene3D" id="3.10.20.600">
    <property type="match status" value="1"/>
</dbReference>
<dbReference type="Gene3D" id="3.40.50.11540">
    <property type="entry name" value="NADH-ubiquinone oxidoreductase 51kDa subunit"/>
    <property type="match status" value="1"/>
</dbReference>
<dbReference type="Gene3D" id="1.20.1440.230">
    <property type="entry name" value="NADH-ubiquinone oxidoreductase 51kDa subunit, iron-sulphur binding domain"/>
    <property type="match status" value="1"/>
</dbReference>
<dbReference type="InterPro" id="IPR050837">
    <property type="entry name" value="ComplexI_51kDa_subunit"/>
</dbReference>
<dbReference type="InterPro" id="IPR001949">
    <property type="entry name" value="NADH-UbQ_OxRdtase_51kDa_CS"/>
</dbReference>
<dbReference type="InterPro" id="IPR011537">
    <property type="entry name" value="NADH-UbQ_OxRdtase_suF"/>
</dbReference>
<dbReference type="InterPro" id="IPR011538">
    <property type="entry name" value="Nuo51_FMN-bd"/>
</dbReference>
<dbReference type="InterPro" id="IPR037225">
    <property type="entry name" value="Nuo51_FMN-bd_sf"/>
</dbReference>
<dbReference type="InterPro" id="IPR019575">
    <property type="entry name" value="Nuop51_4Fe4S-bd"/>
</dbReference>
<dbReference type="InterPro" id="IPR037207">
    <property type="entry name" value="Nuop51_4Fe4S-bd_sf"/>
</dbReference>
<dbReference type="InterPro" id="IPR054765">
    <property type="entry name" value="SLBB_dom"/>
</dbReference>
<dbReference type="NCBIfam" id="TIGR01959">
    <property type="entry name" value="nuoF_fam"/>
    <property type="match status" value="1"/>
</dbReference>
<dbReference type="NCBIfam" id="NF010120">
    <property type="entry name" value="PRK13596.1"/>
    <property type="match status" value="1"/>
</dbReference>
<dbReference type="PANTHER" id="PTHR11780:SF10">
    <property type="entry name" value="NADH DEHYDROGENASE [UBIQUINONE] FLAVOPROTEIN 1, MITOCHONDRIAL"/>
    <property type="match status" value="1"/>
</dbReference>
<dbReference type="PANTHER" id="PTHR11780">
    <property type="entry name" value="NADH-UBIQUINONE OXIDOREDUCTASE FLAVOPROTEIN 1 NDUFV1"/>
    <property type="match status" value="1"/>
</dbReference>
<dbReference type="Pfam" id="PF01512">
    <property type="entry name" value="Complex1_51K"/>
    <property type="match status" value="1"/>
</dbReference>
<dbReference type="Pfam" id="PF10589">
    <property type="entry name" value="NADH_4Fe-4S"/>
    <property type="match status" value="1"/>
</dbReference>
<dbReference type="Pfam" id="PF22461">
    <property type="entry name" value="SLBB_2"/>
    <property type="match status" value="1"/>
</dbReference>
<dbReference type="SMART" id="SM00928">
    <property type="entry name" value="NADH_4Fe-4S"/>
    <property type="match status" value="1"/>
</dbReference>
<dbReference type="SUPFAM" id="SSF142019">
    <property type="entry name" value="Nqo1 FMN-binding domain-like"/>
    <property type="match status" value="1"/>
</dbReference>
<dbReference type="SUPFAM" id="SSF142984">
    <property type="entry name" value="Nqo1 middle domain-like"/>
    <property type="match status" value="1"/>
</dbReference>
<dbReference type="SUPFAM" id="SSF140490">
    <property type="entry name" value="Nqo1C-terminal domain-like"/>
    <property type="match status" value="1"/>
</dbReference>
<dbReference type="PROSITE" id="PS00644">
    <property type="entry name" value="COMPLEX1_51K_1"/>
    <property type="match status" value="1"/>
</dbReference>
<dbReference type="PROSITE" id="PS00645">
    <property type="entry name" value="COMPLEX1_51K_2"/>
    <property type="match status" value="1"/>
</dbReference>
<feature type="transit peptide" description="Mitochondrion">
    <location>
        <begin position="1"/>
        <end status="unknown"/>
    </location>
</feature>
<feature type="chain" id="PRO_0000327999" description="NADH dehydrogenase [ubiquinone] flavoprotein 1, mitochondrial">
    <location>
        <begin status="unknown"/>
        <end position="479"/>
    </location>
</feature>
<feature type="binding site" evidence="1">
    <location>
        <begin position="103"/>
        <end position="112"/>
    </location>
    <ligand>
        <name>NADH</name>
        <dbReference type="ChEBI" id="CHEBI:57945"/>
    </ligand>
</feature>
<feature type="binding site" evidence="1">
    <location>
        <begin position="216"/>
        <end position="264"/>
    </location>
    <ligand>
        <name>FMN</name>
        <dbReference type="ChEBI" id="CHEBI:58210"/>
    </ligand>
</feature>
<feature type="binding site" evidence="2">
    <location>
        <position position="396"/>
    </location>
    <ligand>
        <name>[4Fe-4S] cluster</name>
        <dbReference type="ChEBI" id="CHEBI:49883"/>
    </ligand>
</feature>
<feature type="binding site" evidence="2">
    <location>
        <position position="399"/>
    </location>
    <ligand>
        <name>[4Fe-4S] cluster</name>
        <dbReference type="ChEBI" id="CHEBI:49883"/>
    </ligand>
</feature>
<feature type="binding site" evidence="2">
    <location>
        <position position="402"/>
    </location>
    <ligand>
        <name>[4Fe-4S] cluster</name>
        <dbReference type="ChEBI" id="CHEBI:49883"/>
    </ligand>
</feature>
<feature type="binding site" evidence="2">
    <location>
        <position position="442"/>
    </location>
    <ligand>
        <name>[4Fe-4S] cluster</name>
        <dbReference type="ChEBI" id="CHEBI:49883"/>
    </ligand>
</feature>
<feature type="sequence conflict" description="In Ref. 1; AAB03672." evidence="3" ref="1">
    <original>D</original>
    <variation>N</variation>
    <location>
        <position position="24"/>
    </location>
</feature>
<feature type="sequence conflict" description="In Ref. 1; AAB03672." evidence="3" ref="1">
    <original>K</original>
    <variation>E</variation>
    <location>
        <position position="120"/>
    </location>
</feature>
<feature type="sequence conflict" description="In Ref. 1; AAB03672." evidence="3" ref="1">
    <original>E</original>
    <variation>G</variation>
    <location>
        <position position="231"/>
    </location>
</feature>